<organism>
    <name type="scientific">Acinetobacter baylyi (strain ATCC 33305 / BD413 / ADP1)</name>
    <dbReference type="NCBI Taxonomy" id="62977"/>
    <lineage>
        <taxon>Bacteria</taxon>
        <taxon>Pseudomonadati</taxon>
        <taxon>Pseudomonadota</taxon>
        <taxon>Gammaproteobacteria</taxon>
        <taxon>Moraxellales</taxon>
        <taxon>Moraxellaceae</taxon>
        <taxon>Acinetobacter</taxon>
    </lineage>
</organism>
<feature type="chain" id="PRO_0000148420" description="Dihydroorotate dehydrogenase (quinone)">
    <location>
        <begin position="1"/>
        <end position="334"/>
    </location>
</feature>
<feature type="active site" description="Nucleophile" evidence="1">
    <location>
        <position position="172"/>
    </location>
</feature>
<feature type="binding site" evidence="1">
    <location>
        <begin position="59"/>
        <end position="63"/>
    </location>
    <ligand>
        <name>FMN</name>
        <dbReference type="ChEBI" id="CHEBI:58210"/>
    </ligand>
</feature>
<feature type="binding site" evidence="1">
    <location>
        <position position="63"/>
    </location>
    <ligand>
        <name>substrate</name>
    </ligand>
</feature>
<feature type="binding site" evidence="1">
    <location>
        <position position="83"/>
    </location>
    <ligand>
        <name>FMN</name>
        <dbReference type="ChEBI" id="CHEBI:58210"/>
    </ligand>
</feature>
<feature type="binding site" evidence="1">
    <location>
        <begin position="108"/>
        <end position="112"/>
    </location>
    <ligand>
        <name>substrate</name>
    </ligand>
</feature>
<feature type="binding site" evidence="1">
    <location>
        <position position="136"/>
    </location>
    <ligand>
        <name>FMN</name>
        <dbReference type="ChEBI" id="CHEBI:58210"/>
    </ligand>
</feature>
<feature type="binding site" evidence="1">
    <location>
        <position position="169"/>
    </location>
    <ligand>
        <name>FMN</name>
        <dbReference type="ChEBI" id="CHEBI:58210"/>
    </ligand>
</feature>
<feature type="binding site" evidence="1">
    <location>
        <position position="169"/>
    </location>
    <ligand>
        <name>substrate</name>
    </ligand>
</feature>
<feature type="binding site" evidence="1">
    <location>
        <position position="174"/>
    </location>
    <ligand>
        <name>substrate</name>
    </ligand>
</feature>
<feature type="binding site" evidence="1">
    <location>
        <position position="214"/>
    </location>
    <ligand>
        <name>FMN</name>
        <dbReference type="ChEBI" id="CHEBI:58210"/>
    </ligand>
</feature>
<feature type="binding site" evidence="1">
    <location>
        <position position="242"/>
    </location>
    <ligand>
        <name>FMN</name>
        <dbReference type="ChEBI" id="CHEBI:58210"/>
    </ligand>
</feature>
<feature type="binding site" evidence="1">
    <location>
        <begin position="243"/>
        <end position="244"/>
    </location>
    <ligand>
        <name>substrate</name>
    </ligand>
</feature>
<feature type="binding site" evidence="1">
    <location>
        <position position="265"/>
    </location>
    <ligand>
        <name>FMN</name>
        <dbReference type="ChEBI" id="CHEBI:58210"/>
    </ligand>
</feature>
<feature type="binding site" evidence="1">
    <location>
        <position position="294"/>
    </location>
    <ligand>
        <name>FMN</name>
        <dbReference type="ChEBI" id="CHEBI:58210"/>
    </ligand>
</feature>
<feature type="binding site" evidence="1">
    <location>
        <begin position="315"/>
        <end position="316"/>
    </location>
    <ligand>
        <name>FMN</name>
        <dbReference type="ChEBI" id="CHEBI:58210"/>
    </ligand>
</feature>
<dbReference type="EC" id="1.3.5.2" evidence="1"/>
<dbReference type="EMBL" id="CR543861">
    <property type="protein sequence ID" value="CAG68191.1"/>
    <property type="molecule type" value="Genomic_DNA"/>
</dbReference>
<dbReference type="RefSeq" id="WP_004925799.1">
    <property type="nucleotide sequence ID" value="NC_005966.1"/>
</dbReference>
<dbReference type="SMR" id="Q6FCL9"/>
<dbReference type="STRING" id="202950.GCA_001485005_01078"/>
<dbReference type="GeneID" id="45233736"/>
<dbReference type="KEGG" id="aci:ACIAD1321"/>
<dbReference type="eggNOG" id="COG0167">
    <property type="taxonomic scope" value="Bacteria"/>
</dbReference>
<dbReference type="HOGENOM" id="CLU_013640_2_0_6"/>
<dbReference type="OrthoDB" id="9802377at2"/>
<dbReference type="BioCyc" id="ASP62977:ACIAD_RS06070-MONOMER"/>
<dbReference type="UniPathway" id="UPA00070">
    <property type="reaction ID" value="UER00946"/>
</dbReference>
<dbReference type="Proteomes" id="UP000000430">
    <property type="component" value="Chromosome"/>
</dbReference>
<dbReference type="GO" id="GO:0005737">
    <property type="term" value="C:cytoplasm"/>
    <property type="evidence" value="ECO:0007669"/>
    <property type="project" value="InterPro"/>
</dbReference>
<dbReference type="GO" id="GO:0005886">
    <property type="term" value="C:plasma membrane"/>
    <property type="evidence" value="ECO:0007669"/>
    <property type="project" value="UniProtKB-SubCell"/>
</dbReference>
<dbReference type="GO" id="GO:0106430">
    <property type="term" value="F:dihydroorotate dehydrogenase (quinone) activity"/>
    <property type="evidence" value="ECO:0007669"/>
    <property type="project" value="UniProtKB-EC"/>
</dbReference>
<dbReference type="GO" id="GO:0006207">
    <property type="term" value="P:'de novo' pyrimidine nucleobase biosynthetic process"/>
    <property type="evidence" value="ECO:0007669"/>
    <property type="project" value="InterPro"/>
</dbReference>
<dbReference type="GO" id="GO:0044205">
    <property type="term" value="P:'de novo' UMP biosynthetic process"/>
    <property type="evidence" value="ECO:0007669"/>
    <property type="project" value="UniProtKB-UniRule"/>
</dbReference>
<dbReference type="CDD" id="cd04738">
    <property type="entry name" value="DHOD_2_like"/>
    <property type="match status" value="1"/>
</dbReference>
<dbReference type="FunFam" id="3.20.20.70:FF:000028">
    <property type="entry name" value="Dihydroorotate dehydrogenase (quinone)"/>
    <property type="match status" value="1"/>
</dbReference>
<dbReference type="Gene3D" id="3.20.20.70">
    <property type="entry name" value="Aldolase class I"/>
    <property type="match status" value="1"/>
</dbReference>
<dbReference type="HAMAP" id="MF_00225">
    <property type="entry name" value="DHO_dh_type2"/>
    <property type="match status" value="1"/>
</dbReference>
<dbReference type="InterPro" id="IPR013785">
    <property type="entry name" value="Aldolase_TIM"/>
</dbReference>
<dbReference type="InterPro" id="IPR050074">
    <property type="entry name" value="DHO_dehydrogenase"/>
</dbReference>
<dbReference type="InterPro" id="IPR012135">
    <property type="entry name" value="Dihydroorotate_DH_1_2"/>
</dbReference>
<dbReference type="InterPro" id="IPR005719">
    <property type="entry name" value="Dihydroorotate_DH_2"/>
</dbReference>
<dbReference type="InterPro" id="IPR005720">
    <property type="entry name" value="Dihydroorotate_DH_cat"/>
</dbReference>
<dbReference type="InterPro" id="IPR001295">
    <property type="entry name" value="Dihydroorotate_DH_CS"/>
</dbReference>
<dbReference type="NCBIfam" id="NF003644">
    <property type="entry name" value="PRK05286.1-1"/>
    <property type="match status" value="1"/>
</dbReference>
<dbReference type="NCBIfam" id="NF003645">
    <property type="entry name" value="PRK05286.1-2"/>
    <property type="match status" value="1"/>
</dbReference>
<dbReference type="NCBIfam" id="NF003646">
    <property type="entry name" value="PRK05286.1-4"/>
    <property type="match status" value="1"/>
</dbReference>
<dbReference type="NCBIfam" id="NF003652">
    <property type="entry name" value="PRK05286.2-5"/>
    <property type="match status" value="1"/>
</dbReference>
<dbReference type="NCBIfam" id="TIGR01036">
    <property type="entry name" value="pyrD_sub2"/>
    <property type="match status" value="1"/>
</dbReference>
<dbReference type="PANTHER" id="PTHR48109:SF4">
    <property type="entry name" value="DIHYDROOROTATE DEHYDROGENASE (QUINONE), MITOCHONDRIAL"/>
    <property type="match status" value="1"/>
</dbReference>
<dbReference type="PANTHER" id="PTHR48109">
    <property type="entry name" value="DIHYDROOROTATE DEHYDROGENASE (QUINONE), MITOCHONDRIAL-RELATED"/>
    <property type="match status" value="1"/>
</dbReference>
<dbReference type="Pfam" id="PF01180">
    <property type="entry name" value="DHO_dh"/>
    <property type="match status" value="1"/>
</dbReference>
<dbReference type="PIRSF" id="PIRSF000164">
    <property type="entry name" value="DHO_oxidase"/>
    <property type="match status" value="1"/>
</dbReference>
<dbReference type="SUPFAM" id="SSF51395">
    <property type="entry name" value="FMN-linked oxidoreductases"/>
    <property type="match status" value="1"/>
</dbReference>
<dbReference type="PROSITE" id="PS00911">
    <property type="entry name" value="DHODEHASE_1"/>
    <property type="match status" value="1"/>
</dbReference>
<gene>
    <name evidence="1" type="primary">pyrD</name>
    <name type="ordered locus">ACIAD1321</name>
</gene>
<reference key="1">
    <citation type="journal article" date="2004" name="Nucleic Acids Res.">
        <title>Unique features revealed by the genome sequence of Acinetobacter sp. ADP1, a versatile and naturally transformation competent bacterium.</title>
        <authorList>
            <person name="Barbe V."/>
            <person name="Vallenet D."/>
            <person name="Fonknechten N."/>
            <person name="Kreimeyer A."/>
            <person name="Oztas S."/>
            <person name="Labarre L."/>
            <person name="Cruveiller S."/>
            <person name="Robert C."/>
            <person name="Duprat S."/>
            <person name="Wincker P."/>
            <person name="Ornston L.N."/>
            <person name="Weissenbach J."/>
            <person name="Marliere P."/>
            <person name="Cohen G.N."/>
            <person name="Medigue C."/>
        </authorList>
    </citation>
    <scope>NUCLEOTIDE SEQUENCE [LARGE SCALE GENOMIC DNA]</scope>
    <source>
        <strain>ATCC 33305 / BD413 / ADP1</strain>
    </source>
</reference>
<name>PYRD_ACIAD</name>
<comment type="function">
    <text evidence="1">Catalyzes the conversion of dihydroorotate to orotate with quinone as electron acceptor.</text>
</comment>
<comment type="catalytic activity">
    <reaction evidence="1">
        <text>(S)-dihydroorotate + a quinone = orotate + a quinol</text>
        <dbReference type="Rhea" id="RHEA:30187"/>
        <dbReference type="ChEBI" id="CHEBI:24646"/>
        <dbReference type="ChEBI" id="CHEBI:30839"/>
        <dbReference type="ChEBI" id="CHEBI:30864"/>
        <dbReference type="ChEBI" id="CHEBI:132124"/>
        <dbReference type="EC" id="1.3.5.2"/>
    </reaction>
</comment>
<comment type="cofactor">
    <cofactor evidence="1">
        <name>FMN</name>
        <dbReference type="ChEBI" id="CHEBI:58210"/>
    </cofactor>
    <text evidence="1">Binds 1 FMN per subunit.</text>
</comment>
<comment type="pathway">
    <text evidence="1">Pyrimidine metabolism; UMP biosynthesis via de novo pathway; orotate from (S)-dihydroorotate (quinone route): step 1/1.</text>
</comment>
<comment type="subunit">
    <text evidence="1">Monomer.</text>
</comment>
<comment type="subcellular location">
    <subcellularLocation>
        <location evidence="1">Cell membrane</location>
        <topology evidence="1">Peripheral membrane protein</topology>
    </subcellularLocation>
</comment>
<comment type="similarity">
    <text evidence="1">Belongs to the dihydroorotate dehydrogenase family. Type 2 subfamily.</text>
</comment>
<sequence length="334" mass="36308">MLYSLARPMLFSLAPERAHELTLSMLKTAHKMGMLRQTIQPKPVTCMGIEFPNPVGLAAGLDKNGAYIDALAGLGFGFIEIGTITPRPQSGNPKPRLFRIPEAKAIINRMGFNNEGVDQLVENVKAAKFRGILGINIGKNADTPVENAVDDYLICLEKVYNYASYITVNISSPNTKNLRSLQSGDALTELLETLKKRQLELAEQYHHYVPLVLKVAPDLTHEDIQFISEQLLTFKIDGLIVTNTTLSREGVENLPFGNEAGGLSGAPVFEKSTECLRSFAKVLNDQIPLIGVGGITQGEHAVAKKDAGASLVQIYSGLIYTGPDLIKECVSAIT</sequence>
<accession>Q6FCL9</accession>
<proteinExistence type="inferred from homology"/>
<protein>
    <recommendedName>
        <fullName evidence="1">Dihydroorotate dehydrogenase (quinone)</fullName>
        <ecNumber evidence="1">1.3.5.2</ecNumber>
    </recommendedName>
    <alternativeName>
        <fullName evidence="1">DHOdehase</fullName>
        <shortName evidence="1">DHOD</shortName>
        <shortName evidence="1">DHODase</shortName>
    </alternativeName>
    <alternativeName>
        <fullName evidence="1">Dihydroorotate oxidase</fullName>
    </alternativeName>
</protein>
<keyword id="KW-1003">Cell membrane</keyword>
<keyword id="KW-0285">Flavoprotein</keyword>
<keyword id="KW-0288">FMN</keyword>
<keyword id="KW-0472">Membrane</keyword>
<keyword id="KW-0560">Oxidoreductase</keyword>
<keyword id="KW-0665">Pyrimidine biosynthesis</keyword>
<evidence type="ECO:0000255" key="1">
    <source>
        <dbReference type="HAMAP-Rule" id="MF_00225"/>
    </source>
</evidence>